<feature type="signal peptide" evidence="1">
    <location>
        <begin position="1"/>
        <end position="20"/>
    </location>
</feature>
<feature type="chain" id="PRO_0000288802" description="Inactive serine protease 54">
    <location>
        <begin position="21"/>
        <end position="382"/>
    </location>
</feature>
<feature type="domain" description="Peptidase S1" evidence="2">
    <location>
        <begin position="29"/>
        <end position="258"/>
    </location>
</feature>
<feature type="glycosylation site" description="N-linked (GlcNAc...) asparagine" evidence="1">
    <location>
        <position position="113"/>
    </location>
</feature>
<feature type="disulfide bond" evidence="2">
    <location>
        <begin position="154"/>
        <end position="216"/>
    </location>
</feature>
<feature type="disulfide bond" evidence="2">
    <location>
        <begin position="185"/>
        <end position="195"/>
    </location>
</feature>
<feature type="disulfide bond" evidence="2">
    <location>
        <begin position="206"/>
        <end position="237"/>
    </location>
</feature>
<dbReference type="EMBL" id="BC079217">
    <property type="protein sequence ID" value="AAH79217.1"/>
    <property type="molecule type" value="mRNA"/>
</dbReference>
<dbReference type="RefSeq" id="NP_001013910.1">
    <property type="nucleotide sequence ID" value="NM_001013888.1"/>
</dbReference>
<dbReference type="RefSeq" id="XP_008770495.1">
    <property type="nucleotide sequence ID" value="XM_008772273.2"/>
</dbReference>
<dbReference type="SMR" id="Q6AY28"/>
<dbReference type="FunCoup" id="Q6AY28">
    <property type="interactions" value="9"/>
</dbReference>
<dbReference type="STRING" id="10116.ENSRNOP00000036855"/>
<dbReference type="MEROPS" id="S01.992"/>
<dbReference type="GlyCosmos" id="Q6AY28">
    <property type="glycosylation" value="1 site, No reported glycans"/>
</dbReference>
<dbReference type="GlyGen" id="Q6AY28">
    <property type="glycosylation" value="1 site"/>
</dbReference>
<dbReference type="PaxDb" id="10116-ENSRNOP00000036855"/>
<dbReference type="Ensembl" id="ENSRNOT00000033953.5">
    <property type="protein sequence ID" value="ENSRNOP00000036855.4"/>
    <property type="gene ID" value="ENSRNOG00000023092.5"/>
</dbReference>
<dbReference type="GeneID" id="291846"/>
<dbReference type="KEGG" id="rno:291846"/>
<dbReference type="UCSC" id="RGD:1307877">
    <property type="organism name" value="rat"/>
</dbReference>
<dbReference type="AGR" id="RGD:1307877"/>
<dbReference type="CTD" id="221191"/>
<dbReference type="RGD" id="1307877">
    <property type="gene designation" value="Prss54"/>
</dbReference>
<dbReference type="eggNOG" id="KOG3627">
    <property type="taxonomic scope" value="Eukaryota"/>
</dbReference>
<dbReference type="GeneTree" id="ENSGT01020000230389"/>
<dbReference type="HOGENOM" id="CLU_058835_0_0_1"/>
<dbReference type="InParanoid" id="Q6AY28"/>
<dbReference type="OMA" id="TDTAMQF"/>
<dbReference type="OrthoDB" id="6261922at2759"/>
<dbReference type="PhylomeDB" id="Q6AY28"/>
<dbReference type="TreeFam" id="TF338267"/>
<dbReference type="PRO" id="PR:Q6AY28"/>
<dbReference type="Proteomes" id="UP000002494">
    <property type="component" value="Chromosome 19"/>
</dbReference>
<dbReference type="Bgee" id="ENSRNOG00000023092">
    <property type="expression patterns" value="Expressed in testis"/>
</dbReference>
<dbReference type="GO" id="GO:0005576">
    <property type="term" value="C:extracellular region"/>
    <property type="evidence" value="ECO:0007669"/>
    <property type="project" value="UniProtKB-SubCell"/>
</dbReference>
<dbReference type="GO" id="GO:0004252">
    <property type="term" value="F:serine-type endopeptidase activity"/>
    <property type="evidence" value="ECO:0000318"/>
    <property type="project" value="GO_Central"/>
</dbReference>
<dbReference type="GO" id="GO:0006508">
    <property type="term" value="P:proteolysis"/>
    <property type="evidence" value="ECO:0000318"/>
    <property type="project" value="GO_Central"/>
</dbReference>
<dbReference type="FunFam" id="2.40.10.10:FF:000125">
    <property type="entry name" value="inactive serine protease 54"/>
    <property type="match status" value="1"/>
</dbReference>
<dbReference type="Gene3D" id="2.40.10.10">
    <property type="entry name" value="Trypsin-like serine proteases"/>
    <property type="match status" value="2"/>
</dbReference>
<dbReference type="InterPro" id="IPR009003">
    <property type="entry name" value="Peptidase_S1_PA"/>
</dbReference>
<dbReference type="InterPro" id="IPR043504">
    <property type="entry name" value="Peptidase_S1_PA_chymotrypsin"/>
</dbReference>
<dbReference type="InterPro" id="IPR001254">
    <property type="entry name" value="Trypsin_dom"/>
</dbReference>
<dbReference type="PANTHER" id="PTHR24250">
    <property type="entry name" value="CHYMOTRYPSIN-RELATED"/>
    <property type="match status" value="1"/>
</dbReference>
<dbReference type="PANTHER" id="PTHR24250:SF45">
    <property type="entry name" value="INACTIVE SERINE PROTEASE 54"/>
    <property type="match status" value="1"/>
</dbReference>
<dbReference type="Pfam" id="PF00089">
    <property type="entry name" value="Trypsin"/>
    <property type="match status" value="1"/>
</dbReference>
<dbReference type="SMART" id="SM00020">
    <property type="entry name" value="Tryp_SPc"/>
    <property type="match status" value="1"/>
</dbReference>
<dbReference type="SUPFAM" id="SSF50494">
    <property type="entry name" value="Trypsin-like serine proteases"/>
    <property type="match status" value="1"/>
</dbReference>
<dbReference type="PROSITE" id="PS50240">
    <property type="entry name" value="TRYPSIN_DOM"/>
    <property type="match status" value="1"/>
</dbReference>
<organism>
    <name type="scientific">Rattus norvegicus</name>
    <name type="common">Rat</name>
    <dbReference type="NCBI Taxonomy" id="10116"/>
    <lineage>
        <taxon>Eukaryota</taxon>
        <taxon>Metazoa</taxon>
        <taxon>Chordata</taxon>
        <taxon>Craniata</taxon>
        <taxon>Vertebrata</taxon>
        <taxon>Euteleostomi</taxon>
        <taxon>Mammalia</taxon>
        <taxon>Eutheria</taxon>
        <taxon>Euarchontoglires</taxon>
        <taxon>Glires</taxon>
        <taxon>Rodentia</taxon>
        <taxon>Myomorpha</taxon>
        <taxon>Muroidea</taxon>
        <taxon>Muridae</taxon>
        <taxon>Murinae</taxon>
        <taxon>Rattus</taxon>
    </lineage>
</organism>
<accession>Q6AY28</accession>
<gene>
    <name type="primary">Prss54</name>
    <name type="synonym">Klkbl4</name>
</gene>
<protein>
    <recommendedName>
        <fullName>Inactive serine protease 54</fullName>
    </recommendedName>
    <alternativeName>
        <fullName>Plasma kallikrein-like protein 4</fullName>
    </alternativeName>
</protein>
<sequence length="382" mass="42921">MAELRGILLLLLYMSHSSSAICGIQKANIVDQLHENLVSSTEFPWVVSIQDKQYTHLAFGCILSEFWILSTASALQNRKEVIAVVGIANMDPRNADHKEYSINAIIPHENFNNNSMRNNIALLRTDSAIHFDDLVQPICFLGKSLHKPTALKNCWVAGWNPTSATGNHMTMSILRRISVNDIEVCPLHRQQKTECASHTNKDSNVCLGEPGNPMMCQVKKLDLWILRGLLAYGSDLCPGLLLYTSVDDYSNWIIAKTRKAGPPLSSIHPWEKLVLELPFHQSNIALTKNSYSVHSYAWPQSYSQGLRMSTMYDKQKDVWQNLRVNGQQEAGRPSNVAIQPMYYDYYGGEAGEGRAVAGQNRLHWSQERILMSFVLVFLGSGV</sequence>
<evidence type="ECO:0000255" key="1"/>
<evidence type="ECO:0000255" key="2">
    <source>
        <dbReference type="PROSITE-ProRule" id="PRU00274"/>
    </source>
</evidence>
<evidence type="ECO:0000305" key="3"/>
<proteinExistence type="evidence at protein level"/>
<reference key="1">
    <citation type="journal article" date="2004" name="Genome Res.">
        <title>The status, quality, and expansion of the NIH full-length cDNA project: the Mammalian Gene Collection (MGC).</title>
        <authorList>
            <consortium name="The MGC Project Team"/>
        </authorList>
    </citation>
    <scope>NUCLEOTIDE SEQUENCE [LARGE SCALE MRNA]</scope>
    <source>
        <tissue>Testis</tissue>
    </source>
</reference>
<reference key="2">
    <citation type="submission" date="2007-04" db="UniProtKB">
        <authorList>
            <person name="Lubec G."/>
            <person name="Chen W.-Q."/>
        </authorList>
    </citation>
    <scope>PROTEIN SEQUENCE OF 118-124</scope>
    <scope>IDENTIFICATION BY MASS SPECTROMETRY</scope>
    <source>
        <strain>Sprague-Dawley</strain>
        <tissue>Hippocampus</tissue>
    </source>
</reference>
<name>PRS54_RAT</name>
<keyword id="KW-0903">Direct protein sequencing</keyword>
<keyword id="KW-1015">Disulfide bond</keyword>
<keyword id="KW-0325">Glycoprotein</keyword>
<keyword id="KW-1185">Reference proteome</keyword>
<keyword id="KW-0964">Secreted</keyword>
<keyword id="KW-0721">Serine protease homolog</keyword>
<keyword id="KW-0732">Signal</keyword>
<comment type="subcellular location">
    <subcellularLocation>
        <location evidence="3">Secreted</location>
    </subcellularLocation>
</comment>
<comment type="similarity">
    <text evidence="2">Belongs to the peptidase S1 family. Plasma kallikrein subfamily.</text>
</comment>
<comment type="caution">
    <text evidence="3">Although related to peptidase S1 family, lacks the essential His, Asp, and Ser residues of the catalytic triad at positions 73, 119 and 210 and is therefore predicted to have lost protease activity.</text>
</comment>